<name>PELD_ASPNC</name>
<comment type="function">
    <text evidence="1">Pectinolytic enzymes consist of four classes of enzymes: pectin lyase, polygalacturonase, pectin methylesterase and rhamnogalacturonase. Among pectinolytic enzymes, pectin lyase is the most important in depolymerization of pectin, since it cleaves internal glycosidic bonds of highly methylated pectins (By similarity).</text>
</comment>
<comment type="catalytic activity">
    <reaction>
        <text>Eliminative cleavage of (1-&gt;4)-alpha-D-galacturonan methyl ester to give oligosaccharides with 4-deoxy-6-O-methyl-alpha-D-galact-4-enuronosyl groups at their non-reducing ends.</text>
        <dbReference type="EC" id="4.2.2.10"/>
    </reaction>
</comment>
<comment type="subcellular location">
    <subcellularLocation>
        <location evidence="1">Secreted</location>
    </subcellularLocation>
</comment>
<comment type="similarity">
    <text evidence="4">Belongs to the polysaccharide lyase 1 family.</text>
</comment>
<keyword id="KW-0119">Carbohydrate metabolism</keyword>
<keyword id="KW-0961">Cell wall biogenesis/degradation</keyword>
<keyword id="KW-1015">Disulfide bond</keyword>
<keyword id="KW-0325">Glycoprotein</keyword>
<keyword id="KW-0456">Lyase</keyword>
<keyword id="KW-0624">Polysaccharide degradation</keyword>
<keyword id="KW-1185">Reference proteome</keyword>
<keyword id="KW-0964">Secreted</keyword>
<keyword id="KW-0732">Signal</keyword>
<reference key="1">
    <citation type="journal article" date="2007" name="Nat. Biotechnol.">
        <title>Genome sequencing and analysis of the versatile cell factory Aspergillus niger CBS 513.88.</title>
        <authorList>
            <person name="Pel H.J."/>
            <person name="de Winde J.H."/>
            <person name="Archer D.B."/>
            <person name="Dyer P.S."/>
            <person name="Hofmann G."/>
            <person name="Schaap P.J."/>
            <person name="Turner G."/>
            <person name="de Vries R.P."/>
            <person name="Albang R."/>
            <person name="Albermann K."/>
            <person name="Andersen M.R."/>
            <person name="Bendtsen J.D."/>
            <person name="Benen J.A.E."/>
            <person name="van den Berg M."/>
            <person name="Breestraat S."/>
            <person name="Caddick M.X."/>
            <person name="Contreras R."/>
            <person name="Cornell M."/>
            <person name="Coutinho P.M."/>
            <person name="Danchin E.G.J."/>
            <person name="Debets A.J.M."/>
            <person name="Dekker P."/>
            <person name="van Dijck P.W.M."/>
            <person name="van Dijk A."/>
            <person name="Dijkhuizen L."/>
            <person name="Driessen A.J.M."/>
            <person name="d'Enfert C."/>
            <person name="Geysens S."/>
            <person name="Goosen C."/>
            <person name="Groot G.S.P."/>
            <person name="de Groot P.W.J."/>
            <person name="Guillemette T."/>
            <person name="Henrissat B."/>
            <person name="Herweijer M."/>
            <person name="van den Hombergh J.P.T.W."/>
            <person name="van den Hondel C.A.M.J.J."/>
            <person name="van der Heijden R.T.J.M."/>
            <person name="van der Kaaij R.M."/>
            <person name="Klis F.M."/>
            <person name="Kools H.J."/>
            <person name="Kubicek C.P."/>
            <person name="van Kuyk P.A."/>
            <person name="Lauber J."/>
            <person name="Lu X."/>
            <person name="van der Maarel M.J.E.C."/>
            <person name="Meulenberg R."/>
            <person name="Menke H."/>
            <person name="Mortimer M.A."/>
            <person name="Nielsen J."/>
            <person name="Oliver S.G."/>
            <person name="Olsthoorn M."/>
            <person name="Pal K."/>
            <person name="van Peij N.N.M.E."/>
            <person name="Ram A.F.J."/>
            <person name="Rinas U."/>
            <person name="Roubos J.A."/>
            <person name="Sagt C.M.J."/>
            <person name="Schmoll M."/>
            <person name="Sun J."/>
            <person name="Ussery D."/>
            <person name="Varga J."/>
            <person name="Vervecken W."/>
            <person name="van de Vondervoort P.J.J."/>
            <person name="Wedler H."/>
            <person name="Woesten H.A.B."/>
            <person name="Zeng A.-P."/>
            <person name="van Ooyen A.J.J."/>
            <person name="Visser J."/>
            <person name="Stam H."/>
        </authorList>
    </citation>
    <scope>NUCLEOTIDE SEQUENCE [LARGE SCALE GENOMIC DNA]</scope>
    <source>
        <strain>ATCC MYA-4892 / CBS 513.88 / FGSC A1513</strain>
    </source>
</reference>
<organism>
    <name type="scientific">Aspergillus niger (strain ATCC MYA-4892 / CBS 513.88 / FGSC A1513)</name>
    <dbReference type="NCBI Taxonomy" id="425011"/>
    <lineage>
        <taxon>Eukaryota</taxon>
        <taxon>Fungi</taxon>
        <taxon>Dikarya</taxon>
        <taxon>Ascomycota</taxon>
        <taxon>Pezizomycotina</taxon>
        <taxon>Eurotiomycetes</taxon>
        <taxon>Eurotiomycetidae</taxon>
        <taxon>Eurotiales</taxon>
        <taxon>Aspergillaceae</taxon>
        <taxon>Aspergillus</taxon>
        <taxon>Aspergillus subgen. Circumdati</taxon>
    </lineage>
</organism>
<sequence length="373" mass="39024">MKYAAALTAVAALAARAAAVGVSGTPVGFASSATGGGDATPVYPTTTDELVSYLGDDEARVIVLSKTFDFTDTEGTTTTTGCAPWGTASGCQLAINKDDWCTNYEPDAPTTTVTYNTAGELGITVNSNKSLIGEGTSGVIKGRGLRMVSGVSNIIIQNIAVTDINPEYVWGGDAITLDEADLVWIDHVTTARIGRQHYVLGTDADSRVSITNNYINGESDYSATCDGHHYWNVYLDGSSDKVTFSGNYLYKTSGRAPKVQDNTYLHIYNNYWENNSGHAFEIGSGGYVLAEGNYFSNVDTVLETDTFEGALFSSDSASSTCESYIGRSCVANVNGGDLTGTSTTVLSNLSGDTLPSADAASTSPASNAGQGNL</sequence>
<feature type="signal peptide" evidence="2">
    <location>
        <begin position="1"/>
        <end position="24"/>
    </location>
</feature>
<feature type="chain" id="PRO_5000221367" description="Probable pectin lyase D">
    <location>
        <begin position="25"/>
        <end position="373"/>
    </location>
</feature>
<feature type="region of interest" description="Disordered" evidence="3">
    <location>
        <begin position="354"/>
        <end position="373"/>
    </location>
</feature>
<feature type="compositionally biased region" description="Low complexity" evidence="3">
    <location>
        <begin position="354"/>
        <end position="366"/>
    </location>
</feature>
<feature type="active site" evidence="2">
    <location>
        <position position="255"/>
    </location>
</feature>
<feature type="glycosylation site" description="N-linked (GlcNAc...) asparagine" evidence="2">
    <location>
        <position position="128"/>
    </location>
</feature>
<feature type="glycosylation site" description="N-linked (GlcNAc...) asparagine" evidence="2">
    <location>
        <position position="274"/>
    </location>
</feature>
<feature type="glycosylation site" description="N-linked (GlcNAc...) asparagine" evidence="2">
    <location>
        <position position="348"/>
    </location>
</feature>
<feature type="disulfide bond" evidence="1">
    <location>
        <begin position="82"/>
        <end position="101"/>
    </location>
</feature>
<feature type="disulfide bond" evidence="1">
    <location>
        <begin position="91"/>
        <end position="225"/>
    </location>
</feature>
<feature type="disulfide bond" evidence="1">
    <location>
        <begin position="321"/>
        <end position="329"/>
    </location>
</feature>
<accession>A2RBL2</accession>
<dbReference type="EC" id="4.2.2.10"/>
<dbReference type="EMBL" id="AM270415">
    <property type="protein sequence ID" value="CAK47350.1"/>
    <property type="molecule type" value="Genomic_DNA"/>
</dbReference>
<dbReference type="RefSeq" id="XP_001402523.3">
    <property type="nucleotide sequence ID" value="XM_001402486.3"/>
</dbReference>
<dbReference type="SMR" id="A2RBL2"/>
<dbReference type="CAZy" id="PL1">
    <property type="family name" value="Polysaccharide Lyase Family 1"/>
</dbReference>
<dbReference type="GlyCosmos" id="A2RBL2">
    <property type="glycosylation" value="3 sites, No reported glycans"/>
</dbReference>
<dbReference type="EnsemblFungi" id="CAK47350">
    <property type="protein sequence ID" value="CAK47350"/>
    <property type="gene ID" value="An19g00270"/>
</dbReference>
<dbReference type="VEuPathDB" id="FungiDB:An19g00270"/>
<dbReference type="HOGENOM" id="CLU_021980_0_1_1"/>
<dbReference type="OrthoDB" id="88760at5052"/>
<dbReference type="Proteomes" id="UP000006706">
    <property type="component" value="Chromosome 4ER"/>
</dbReference>
<dbReference type="GO" id="GO:0005576">
    <property type="term" value="C:extracellular region"/>
    <property type="evidence" value="ECO:0007669"/>
    <property type="project" value="UniProtKB-SubCell"/>
</dbReference>
<dbReference type="GO" id="GO:0030570">
    <property type="term" value="F:pectate lyase activity"/>
    <property type="evidence" value="ECO:0007669"/>
    <property type="project" value="InterPro"/>
</dbReference>
<dbReference type="GO" id="GO:0047490">
    <property type="term" value="F:pectin lyase activity"/>
    <property type="evidence" value="ECO:0000314"/>
    <property type="project" value="AspGD"/>
</dbReference>
<dbReference type="GO" id="GO:0071555">
    <property type="term" value="P:cell wall organization"/>
    <property type="evidence" value="ECO:0007669"/>
    <property type="project" value="UniProtKB-KW"/>
</dbReference>
<dbReference type="GO" id="GO:0045490">
    <property type="term" value="P:pectin catabolic process"/>
    <property type="evidence" value="ECO:0000250"/>
    <property type="project" value="UniProtKB"/>
</dbReference>
<dbReference type="FunFam" id="2.160.20.10:FF:000003">
    <property type="entry name" value="Pectin lyase F"/>
    <property type="match status" value="1"/>
</dbReference>
<dbReference type="Gene3D" id="2.160.20.10">
    <property type="entry name" value="Single-stranded right-handed beta-helix, Pectin lyase-like"/>
    <property type="match status" value="1"/>
</dbReference>
<dbReference type="InterPro" id="IPR002022">
    <property type="entry name" value="Pec_lyase"/>
</dbReference>
<dbReference type="InterPro" id="IPR012334">
    <property type="entry name" value="Pectin_lyas_fold"/>
</dbReference>
<dbReference type="InterPro" id="IPR011050">
    <property type="entry name" value="Pectin_lyase_fold/virulence"/>
</dbReference>
<dbReference type="InterPro" id="IPR045032">
    <property type="entry name" value="PEL"/>
</dbReference>
<dbReference type="PANTHER" id="PTHR31683">
    <property type="entry name" value="PECTATE LYASE 18-RELATED"/>
    <property type="match status" value="1"/>
</dbReference>
<dbReference type="PANTHER" id="PTHR31683:SF16">
    <property type="entry name" value="PECTIN LYASE A-RELATED"/>
    <property type="match status" value="1"/>
</dbReference>
<dbReference type="Pfam" id="PF00544">
    <property type="entry name" value="Pectate_lyase_4"/>
    <property type="match status" value="1"/>
</dbReference>
<dbReference type="SMART" id="SM00656">
    <property type="entry name" value="Amb_all"/>
    <property type="match status" value="1"/>
</dbReference>
<dbReference type="SUPFAM" id="SSF51126">
    <property type="entry name" value="Pectin lyase-like"/>
    <property type="match status" value="1"/>
</dbReference>
<evidence type="ECO:0000250" key="1"/>
<evidence type="ECO:0000255" key="2"/>
<evidence type="ECO:0000256" key="3">
    <source>
        <dbReference type="SAM" id="MobiDB-lite"/>
    </source>
</evidence>
<evidence type="ECO:0000305" key="4"/>
<proteinExistence type="inferred from homology"/>
<gene>
    <name type="primary">pelD</name>
    <name type="ORF">An19g00270</name>
</gene>
<protein>
    <recommendedName>
        <fullName>Probable pectin lyase D</fullName>
        <shortName>PLD</shortName>
        <ecNumber>4.2.2.10</ecNumber>
    </recommendedName>
</protein>